<keyword id="KW-0119">Carbohydrate metabolism</keyword>
<keyword id="KW-0963">Cytoplasm</keyword>
<keyword id="KW-0413">Isomerase</keyword>
<keyword id="KW-0460">Magnesium</keyword>
<keyword id="KW-0479">Metal-binding</keyword>
<keyword id="KW-1185">Reference proteome</keyword>
<keyword id="KW-0859">Xylose metabolism</keyword>
<reference key="1">
    <citation type="journal article" date="2001" name="Nature">
        <title>Genome sequence of enterohaemorrhagic Escherichia coli O157:H7.</title>
        <authorList>
            <person name="Perna N.T."/>
            <person name="Plunkett G. III"/>
            <person name="Burland V."/>
            <person name="Mau B."/>
            <person name="Glasner J.D."/>
            <person name="Rose D.J."/>
            <person name="Mayhew G.F."/>
            <person name="Evans P.S."/>
            <person name="Gregor J."/>
            <person name="Kirkpatrick H.A."/>
            <person name="Posfai G."/>
            <person name="Hackett J."/>
            <person name="Klink S."/>
            <person name="Boutin A."/>
            <person name="Shao Y."/>
            <person name="Miller L."/>
            <person name="Grotbeck E.J."/>
            <person name="Davis N.W."/>
            <person name="Lim A."/>
            <person name="Dimalanta E.T."/>
            <person name="Potamousis K."/>
            <person name="Apodaca J."/>
            <person name="Anantharaman T.S."/>
            <person name="Lin J."/>
            <person name="Yen G."/>
            <person name="Schwartz D.C."/>
            <person name="Welch R.A."/>
            <person name="Blattner F.R."/>
        </authorList>
    </citation>
    <scope>NUCLEOTIDE SEQUENCE [LARGE SCALE GENOMIC DNA]</scope>
    <source>
        <strain>O157:H7 / EDL933 / ATCC 700927 / EHEC</strain>
    </source>
</reference>
<reference key="2">
    <citation type="journal article" date="2001" name="DNA Res.">
        <title>Complete genome sequence of enterohemorrhagic Escherichia coli O157:H7 and genomic comparison with a laboratory strain K-12.</title>
        <authorList>
            <person name="Hayashi T."/>
            <person name="Makino K."/>
            <person name="Ohnishi M."/>
            <person name="Kurokawa K."/>
            <person name="Ishii K."/>
            <person name="Yokoyama K."/>
            <person name="Han C.-G."/>
            <person name="Ohtsubo E."/>
            <person name="Nakayama K."/>
            <person name="Murata T."/>
            <person name="Tanaka M."/>
            <person name="Tobe T."/>
            <person name="Iida T."/>
            <person name="Takami H."/>
            <person name="Honda T."/>
            <person name="Sasakawa C."/>
            <person name="Ogasawara N."/>
            <person name="Yasunaga T."/>
            <person name="Kuhara S."/>
            <person name="Shiba T."/>
            <person name="Hattori M."/>
            <person name="Shinagawa H."/>
        </authorList>
    </citation>
    <scope>NUCLEOTIDE SEQUENCE [LARGE SCALE GENOMIC DNA]</scope>
    <source>
        <strain>O157:H7 / Sakai / RIMD 0509952 / EHEC</strain>
    </source>
</reference>
<organism>
    <name type="scientific">Escherichia coli O157:H7</name>
    <dbReference type="NCBI Taxonomy" id="83334"/>
    <lineage>
        <taxon>Bacteria</taxon>
        <taxon>Pseudomonadati</taxon>
        <taxon>Pseudomonadota</taxon>
        <taxon>Gammaproteobacteria</taxon>
        <taxon>Enterobacterales</taxon>
        <taxon>Enterobacteriaceae</taxon>
        <taxon>Escherichia</taxon>
    </lineage>
</organism>
<feature type="chain" id="PRO_0000195775" description="Xylose isomerase">
    <location>
        <begin position="1"/>
        <end position="440"/>
    </location>
</feature>
<feature type="active site" evidence="1">
    <location>
        <position position="101"/>
    </location>
</feature>
<feature type="active site" evidence="1">
    <location>
        <position position="104"/>
    </location>
</feature>
<feature type="binding site" evidence="1">
    <location>
        <position position="232"/>
    </location>
    <ligand>
        <name>Mg(2+)</name>
        <dbReference type="ChEBI" id="CHEBI:18420"/>
        <label>1</label>
    </ligand>
</feature>
<feature type="binding site" evidence="1">
    <location>
        <position position="268"/>
    </location>
    <ligand>
        <name>Mg(2+)</name>
        <dbReference type="ChEBI" id="CHEBI:18420"/>
        <label>1</label>
    </ligand>
</feature>
<feature type="binding site" evidence="1">
    <location>
        <position position="268"/>
    </location>
    <ligand>
        <name>Mg(2+)</name>
        <dbReference type="ChEBI" id="CHEBI:18420"/>
        <label>2</label>
    </ligand>
</feature>
<feature type="binding site" evidence="1">
    <location>
        <position position="271"/>
    </location>
    <ligand>
        <name>Mg(2+)</name>
        <dbReference type="ChEBI" id="CHEBI:18420"/>
        <label>2</label>
    </ligand>
</feature>
<feature type="binding site" evidence="1">
    <location>
        <position position="296"/>
    </location>
    <ligand>
        <name>Mg(2+)</name>
        <dbReference type="ChEBI" id="CHEBI:18420"/>
        <label>1</label>
    </ligand>
</feature>
<feature type="binding site" evidence="1">
    <location>
        <position position="307"/>
    </location>
    <ligand>
        <name>Mg(2+)</name>
        <dbReference type="ChEBI" id="CHEBI:18420"/>
        <label>2</label>
    </ligand>
</feature>
<feature type="binding site" evidence="1">
    <location>
        <position position="309"/>
    </location>
    <ligand>
        <name>Mg(2+)</name>
        <dbReference type="ChEBI" id="CHEBI:18420"/>
        <label>2</label>
    </ligand>
</feature>
<feature type="binding site" evidence="1">
    <location>
        <position position="339"/>
    </location>
    <ligand>
        <name>Mg(2+)</name>
        <dbReference type="ChEBI" id="CHEBI:18420"/>
        <label>1</label>
    </ligand>
</feature>
<gene>
    <name evidence="1" type="primary">xylA</name>
    <name type="ordered locus">Z4990</name>
    <name type="ordered locus">ECs4448</name>
</gene>
<proteinExistence type="inferred from homology"/>
<evidence type="ECO:0000255" key="1">
    <source>
        <dbReference type="HAMAP-Rule" id="MF_00455"/>
    </source>
</evidence>
<sequence length="440" mass="49666">MQAYFDQLDRVRYEGSKSSNPLAFRHYNPDELVLGKRMEEHLRFAACYWHTFCWNGADMFGVGAFNRPWQQPGEALALAKRKADVAFEFFHKLHVPFYCFHDVDVSPEGASLKEYINNFAQMVDVLAGKQEESGVKLLWGTANCFTNPRYGAGAATNPDPEVFSWAATQVVTAMEATHKLGGENYVLWGGREGYETLLNTDLRQEREQLGRFMQMVVEHKHKIGFQGTLLIEPKPQEPTKHQYDYDAATVYGFLKQFGLEKEIKLNIEANHATLAGHSFHHEIATAIALGLFGSVDANRGDAQLGWDTDQFPNSVEENALVMYEILKAGGFTTGGLNFDAKVRRQSTDKYDLFYGHIGAMDTMALALKIAACMIEDGELDKRIAQRYSGWNSELGQQILKGQMSLADLAKYAQEHNLSPVHQSGRQEQLENLVNHYLFDK</sequence>
<accession>Q7A9X4</accession>
<accession>Q8XDM3</accession>
<comment type="catalytic activity">
    <reaction evidence="1">
        <text>alpha-D-xylose = alpha-D-xylulofuranose</text>
        <dbReference type="Rhea" id="RHEA:22816"/>
        <dbReference type="ChEBI" id="CHEBI:28518"/>
        <dbReference type="ChEBI" id="CHEBI:188998"/>
        <dbReference type="EC" id="5.3.1.5"/>
    </reaction>
</comment>
<comment type="cofactor">
    <cofactor evidence="1">
        <name>Mg(2+)</name>
        <dbReference type="ChEBI" id="CHEBI:18420"/>
    </cofactor>
    <text evidence="1">Binds 2 magnesium ions per subunit.</text>
</comment>
<comment type="subunit">
    <text evidence="1">Homotetramer.</text>
</comment>
<comment type="subcellular location">
    <subcellularLocation>
        <location evidence="1">Cytoplasm</location>
    </subcellularLocation>
</comment>
<comment type="similarity">
    <text evidence="1">Belongs to the xylose isomerase family.</text>
</comment>
<protein>
    <recommendedName>
        <fullName evidence="1">Xylose isomerase</fullName>
        <ecNumber evidence="1">5.3.1.5</ecNumber>
    </recommendedName>
</protein>
<dbReference type="EC" id="5.3.1.5" evidence="1"/>
<dbReference type="EMBL" id="AE005174">
    <property type="protein sequence ID" value="AAG58714.1"/>
    <property type="molecule type" value="Genomic_DNA"/>
</dbReference>
<dbReference type="EMBL" id="BA000007">
    <property type="protein sequence ID" value="BAB37871.1"/>
    <property type="molecule type" value="Genomic_DNA"/>
</dbReference>
<dbReference type="PIR" id="F86031">
    <property type="entry name" value="F86031"/>
</dbReference>
<dbReference type="PIR" id="H91184">
    <property type="entry name" value="H91184"/>
</dbReference>
<dbReference type="RefSeq" id="NP_312475.1">
    <property type="nucleotide sequence ID" value="NC_002695.1"/>
</dbReference>
<dbReference type="RefSeq" id="WP_001149589.1">
    <property type="nucleotide sequence ID" value="NZ_VOAI01000004.1"/>
</dbReference>
<dbReference type="SMR" id="Q7A9X4"/>
<dbReference type="STRING" id="155864.Z4990"/>
<dbReference type="GeneID" id="915615"/>
<dbReference type="KEGG" id="ece:Z4990"/>
<dbReference type="KEGG" id="ecs:ECs_4448"/>
<dbReference type="PATRIC" id="fig|386585.9.peg.4657"/>
<dbReference type="eggNOG" id="COG2115">
    <property type="taxonomic scope" value="Bacteria"/>
</dbReference>
<dbReference type="HOGENOM" id="CLU_037261_1_0_6"/>
<dbReference type="OMA" id="IAYWHTF"/>
<dbReference type="Proteomes" id="UP000000558">
    <property type="component" value="Chromosome"/>
</dbReference>
<dbReference type="Proteomes" id="UP000002519">
    <property type="component" value="Chromosome"/>
</dbReference>
<dbReference type="GO" id="GO:0005737">
    <property type="term" value="C:cytoplasm"/>
    <property type="evidence" value="ECO:0007669"/>
    <property type="project" value="UniProtKB-SubCell"/>
</dbReference>
<dbReference type="GO" id="GO:0000287">
    <property type="term" value="F:magnesium ion binding"/>
    <property type="evidence" value="ECO:0007669"/>
    <property type="project" value="UniProtKB-UniRule"/>
</dbReference>
<dbReference type="GO" id="GO:0009045">
    <property type="term" value="F:xylose isomerase activity"/>
    <property type="evidence" value="ECO:0007669"/>
    <property type="project" value="UniProtKB-UniRule"/>
</dbReference>
<dbReference type="GO" id="GO:0042732">
    <property type="term" value="P:D-xylose metabolic process"/>
    <property type="evidence" value="ECO:0007669"/>
    <property type="project" value="UniProtKB-UniRule"/>
</dbReference>
<dbReference type="FunFam" id="3.20.20.150:FF:000002">
    <property type="entry name" value="Xylose isomerase"/>
    <property type="match status" value="1"/>
</dbReference>
<dbReference type="Gene3D" id="3.20.20.150">
    <property type="entry name" value="Divalent-metal-dependent TIM barrel enzymes"/>
    <property type="match status" value="1"/>
</dbReference>
<dbReference type="HAMAP" id="MF_00455">
    <property type="entry name" value="Xylose_isom_A"/>
    <property type="match status" value="1"/>
</dbReference>
<dbReference type="InterPro" id="IPR036237">
    <property type="entry name" value="Xyl_isomerase-like_sf"/>
</dbReference>
<dbReference type="InterPro" id="IPR013452">
    <property type="entry name" value="Xylose_isom_bac"/>
</dbReference>
<dbReference type="InterPro" id="IPR001998">
    <property type="entry name" value="Xylose_isomerase"/>
</dbReference>
<dbReference type="NCBIfam" id="NF003998">
    <property type="entry name" value="PRK05474.1"/>
    <property type="match status" value="1"/>
</dbReference>
<dbReference type="NCBIfam" id="TIGR02630">
    <property type="entry name" value="xylose_isom_A"/>
    <property type="match status" value="1"/>
</dbReference>
<dbReference type="PANTHER" id="PTHR48408">
    <property type="match status" value="1"/>
</dbReference>
<dbReference type="PANTHER" id="PTHR48408:SF1">
    <property type="entry name" value="XYLOSE ISOMERASE"/>
    <property type="match status" value="1"/>
</dbReference>
<dbReference type="PRINTS" id="PR00688">
    <property type="entry name" value="XYLOSISMRASE"/>
</dbReference>
<dbReference type="SUPFAM" id="SSF51658">
    <property type="entry name" value="Xylose isomerase-like"/>
    <property type="match status" value="1"/>
</dbReference>
<dbReference type="PROSITE" id="PS51415">
    <property type="entry name" value="XYLOSE_ISOMERASE"/>
    <property type="match status" value="1"/>
</dbReference>
<name>XYLA_ECO57</name>